<feature type="chain" id="PRO_1000060022" description="Chromosomal replication initiator protein DnaA">
    <location>
        <begin position="1"/>
        <end position="444"/>
    </location>
</feature>
<feature type="region of interest" description="Domain I, interacts with DnaA modulators" evidence="1">
    <location>
        <begin position="1"/>
        <end position="66"/>
    </location>
</feature>
<feature type="region of interest" description="Domain II" evidence="1">
    <location>
        <begin position="66"/>
        <end position="100"/>
    </location>
</feature>
<feature type="region of interest" description="Domain III, AAA+ region" evidence="1">
    <location>
        <begin position="101"/>
        <end position="317"/>
    </location>
</feature>
<feature type="region of interest" description="Domain IV, binds dsDNA" evidence="1">
    <location>
        <begin position="318"/>
        <end position="444"/>
    </location>
</feature>
<feature type="binding site" evidence="1">
    <location>
        <position position="144"/>
    </location>
    <ligand>
        <name>ATP</name>
        <dbReference type="ChEBI" id="CHEBI:30616"/>
    </ligand>
</feature>
<feature type="binding site" evidence="1">
    <location>
        <position position="146"/>
    </location>
    <ligand>
        <name>ATP</name>
        <dbReference type="ChEBI" id="CHEBI:30616"/>
    </ligand>
</feature>
<feature type="binding site" evidence="1">
    <location>
        <position position="147"/>
    </location>
    <ligand>
        <name>ATP</name>
        <dbReference type="ChEBI" id="CHEBI:30616"/>
    </ligand>
</feature>
<feature type="binding site" evidence="1">
    <location>
        <position position="148"/>
    </location>
    <ligand>
        <name>ATP</name>
        <dbReference type="ChEBI" id="CHEBI:30616"/>
    </ligand>
</feature>
<protein>
    <recommendedName>
        <fullName evidence="1">Chromosomal replication initiator protein DnaA</fullName>
    </recommendedName>
</protein>
<accession>A8F346</accession>
<gene>
    <name evidence="1" type="primary">dnaA</name>
    <name type="ordered locus">Tlet_0001</name>
</gene>
<proteinExistence type="inferred from homology"/>
<name>DNAA_PSELT</name>
<organism>
    <name type="scientific">Pseudothermotoga lettingae (strain ATCC BAA-301 / DSM 14385 / NBRC 107922 / TMO)</name>
    <name type="common">Thermotoga lettingae</name>
    <dbReference type="NCBI Taxonomy" id="416591"/>
    <lineage>
        <taxon>Bacteria</taxon>
        <taxon>Thermotogati</taxon>
        <taxon>Thermotogota</taxon>
        <taxon>Thermotogae</taxon>
        <taxon>Thermotogales</taxon>
        <taxon>Thermotogaceae</taxon>
        <taxon>Pseudothermotoga</taxon>
    </lineage>
</organism>
<dbReference type="EMBL" id="CP000812">
    <property type="protein sequence ID" value="ABV32574.1"/>
    <property type="molecule type" value="Genomic_DNA"/>
</dbReference>
<dbReference type="RefSeq" id="WP_012002055.1">
    <property type="nucleotide sequence ID" value="NZ_BSDV01000001.1"/>
</dbReference>
<dbReference type="SMR" id="A8F346"/>
<dbReference type="STRING" id="416591.Tlet_0001"/>
<dbReference type="KEGG" id="tle:Tlet_0001"/>
<dbReference type="eggNOG" id="COG0593">
    <property type="taxonomic scope" value="Bacteria"/>
</dbReference>
<dbReference type="HOGENOM" id="CLU_026910_3_2_0"/>
<dbReference type="OrthoDB" id="9807019at2"/>
<dbReference type="Proteomes" id="UP000002016">
    <property type="component" value="Chromosome"/>
</dbReference>
<dbReference type="GO" id="GO:0005737">
    <property type="term" value="C:cytoplasm"/>
    <property type="evidence" value="ECO:0007669"/>
    <property type="project" value="UniProtKB-SubCell"/>
</dbReference>
<dbReference type="GO" id="GO:0005886">
    <property type="term" value="C:plasma membrane"/>
    <property type="evidence" value="ECO:0007669"/>
    <property type="project" value="TreeGrafter"/>
</dbReference>
<dbReference type="GO" id="GO:0005524">
    <property type="term" value="F:ATP binding"/>
    <property type="evidence" value="ECO:0007669"/>
    <property type="project" value="UniProtKB-UniRule"/>
</dbReference>
<dbReference type="GO" id="GO:0016887">
    <property type="term" value="F:ATP hydrolysis activity"/>
    <property type="evidence" value="ECO:0007669"/>
    <property type="project" value="InterPro"/>
</dbReference>
<dbReference type="GO" id="GO:0003688">
    <property type="term" value="F:DNA replication origin binding"/>
    <property type="evidence" value="ECO:0007669"/>
    <property type="project" value="UniProtKB-UniRule"/>
</dbReference>
<dbReference type="GO" id="GO:0008289">
    <property type="term" value="F:lipid binding"/>
    <property type="evidence" value="ECO:0007669"/>
    <property type="project" value="UniProtKB-KW"/>
</dbReference>
<dbReference type="GO" id="GO:0006270">
    <property type="term" value="P:DNA replication initiation"/>
    <property type="evidence" value="ECO:0007669"/>
    <property type="project" value="UniProtKB-UniRule"/>
</dbReference>
<dbReference type="GO" id="GO:0006275">
    <property type="term" value="P:regulation of DNA replication"/>
    <property type="evidence" value="ECO:0007669"/>
    <property type="project" value="UniProtKB-UniRule"/>
</dbReference>
<dbReference type="CDD" id="cd00009">
    <property type="entry name" value="AAA"/>
    <property type="match status" value="1"/>
</dbReference>
<dbReference type="CDD" id="cd06571">
    <property type="entry name" value="Bac_DnaA_C"/>
    <property type="match status" value="1"/>
</dbReference>
<dbReference type="FunFam" id="3.40.50.300:FF:000668">
    <property type="entry name" value="Chromosomal replication initiator protein DnaA"/>
    <property type="match status" value="1"/>
</dbReference>
<dbReference type="Gene3D" id="1.10.1750.10">
    <property type="match status" value="1"/>
</dbReference>
<dbReference type="Gene3D" id="1.10.8.60">
    <property type="match status" value="1"/>
</dbReference>
<dbReference type="Gene3D" id="3.30.300.180">
    <property type="match status" value="1"/>
</dbReference>
<dbReference type="Gene3D" id="3.40.50.300">
    <property type="entry name" value="P-loop containing nucleotide triphosphate hydrolases"/>
    <property type="match status" value="1"/>
</dbReference>
<dbReference type="HAMAP" id="MF_00377">
    <property type="entry name" value="DnaA_bact"/>
    <property type="match status" value="1"/>
</dbReference>
<dbReference type="InterPro" id="IPR003593">
    <property type="entry name" value="AAA+_ATPase"/>
</dbReference>
<dbReference type="InterPro" id="IPR001957">
    <property type="entry name" value="Chromosome_initiator_DnaA"/>
</dbReference>
<dbReference type="InterPro" id="IPR020591">
    <property type="entry name" value="Chromosome_initiator_DnaA-like"/>
</dbReference>
<dbReference type="InterPro" id="IPR013159">
    <property type="entry name" value="DnaA_C"/>
</dbReference>
<dbReference type="InterPro" id="IPR013317">
    <property type="entry name" value="DnaA_dom"/>
</dbReference>
<dbReference type="InterPro" id="IPR024633">
    <property type="entry name" value="DnaA_N_dom"/>
</dbReference>
<dbReference type="InterPro" id="IPR038454">
    <property type="entry name" value="DnaA_N_sf"/>
</dbReference>
<dbReference type="InterPro" id="IPR027417">
    <property type="entry name" value="P-loop_NTPase"/>
</dbReference>
<dbReference type="InterPro" id="IPR010921">
    <property type="entry name" value="Trp_repressor/repl_initiator"/>
</dbReference>
<dbReference type="NCBIfam" id="TIGR00362">
    <property type="entry name" value="DnaA"/>
    <property type="match status" value="1"/>
</dbReference>
<dbReference type="PANTHER" id="PTHR30050">
    <property type="entry name" value="CHROMOSOMAL REPLICATION INITIATOR PROTEIN DNAA"/>
    <property type="match status" value="1"/>
</dbReference>
<dbReference type="PANTHER" id="PTHR30050:SF2">
    <property type="entry name" value="CHROMOSOMAL REPLICATION INITIATOR PROTEIN DNAA"/>
    <property type="match status" value="1"/>
</dbReference>
<dbReference type="Pfam" id="PF00308">
    <property type="entry name" value="Bac_DnaA"/>
    <property type="match status" value="1"/>
</dbReference>
<dbReference type="Pfam" id="PF08299">
    <property type="entry name" value="Bac_DnaA_C"/>
    <property type="match status" value="1"/>
</dbReference>
<dbReference type="Pfam" id="PF11638">
    <property type="entry name" value="DnaA_N"/>
    <property type="match status" value="1"/>
</dbReference>
<dbReference type="PRINTS" id="PR00051">
    <property type="entry name" value="DNAA"/>
</dbReference>
<dbReference type="SMART" id="SM00382">
    <property type="entry name" value="AAA"/>
    <property type="match status" value="1"/>
</dbReference>
<dbReference type="SMART" id="SM00760">
    <property type="entry name" value="Bac_DnaA_C"/>
    <property type="match status" value="1"/>
</dbReference>
<dbReference type="SUPFAM" id="SSF52540">
    <property type="entry name" value="P-loop containing nucleoside triphosphate hydrolases"/>
    <property type="match status" value="1"/>
</dbReference>
<dbReference type="SUPFAM" id="SSF48295">
    <property type="entry name" value="TrpR-like"/>
    <property type="match status" value="1"/>
</dbReference>
<keyword id="KW-0067">ATP-binding</keyword>
<keyword id="KW-0963">Cytoplasm</keyword>
<keyword id="KW-0235">DNA replication</keyword>
<keyword id="KW-0238">DNA-binding</keyword>
<keyword id="KW-0446">Lipid-binding</keyword>
<keyword id="KW-0547">Nucleotide-binding</keyword>
<keyword id="KW-1185">Reference proteome</keyword>
<reference key="1">
    <citation type="submission" date="2007-08" db="EMBL/GenBank/DDBJ databases">
        <title>Complete sequence of Thermotoga lettingae TMO.</title>
        <authorList>
            <consortium name="US DOE Joint Genome Institute"/>
            <person name="Copeland A."/>
            <person name="Lucas S."/>
            <person name="Lapidus A."/>
            <person name="Barry K."/>
            <person name="Glavina del Rio T."/>
            <person name="Dalin E."/>
            <person name="Tice H."/>
            <person name="Pitluck S."/>
            <person name="Foster B."/>
            <person name="Bruce D."/>
            <person name="Schmutz J."/>
            <person name="Larimer F."/>
            <person name="Land M."/>
            <person name="Hauser L."/>
            <person name="Kyrpides N."/>
            <person name="Mikhailova N."/>
            <person name="Nelson K."/>
            <person name="Gogarten J.P."/>
            <person name="Noll K."/>
            <person name="Richardson P."/>
        </authorList>
    </citation>
    <scope>NUCLEOTIDE SEQUENCE [LARGE SCALE GENOMIC DNA]</scope>
    <source>
        <strain>ATCC BAA-301 / DSM 14385 / NBRC 107922 / TMO</strain>
    </source>
</reference>
<sequence length="444" mass="51380">MKSEIIESLKSKLNRRVWESWFGTFDVKEIGPDYVVFQVGNLFIREWLEKKYGSLISKTLRELFGKPMDFRIEHASAKTEEKLDSNEDEPLVKKRPLILTPLNPILTFENFVVGPNNMFAYSTCLEVAKNPGKYNPLFLHGGVGLGKTHLLQAIGHYLFKHEPDMRVIYLTSERFLNELVDSIKKNRVQEFRDKFRNKIDVLLLDDVQFLIGKTGIQTELFHTFNELYNEGKQIVVCSDRDPQQLEKFQDRLVSRFQMGVVTKIEKPDEETCFKIAQKMAQLENAELQEDILKLISKNFSDNLRRLRGALVKLIMYQQISGEKVDLQKAFELLAIQNSYHNKSLPEEKLMNSICEIFGVSQEEILSKSRKKEVALARQIGMYVARNYMGFSLRKVADMFKRSHPTVSHTIQKLEELTNSGNMVIKSQIDRLARCVTGQILDQSV</sequence>
<comment type="function">
    <text evidence="1">Plays an essential role in the initiation and regulation of chromosomal replication. ATP-DnaA binds to the origin of replication (oriC) to initiate formation of the DNA replication initiation complex once per cell cycle. Binds the DnaA box (a 9 base pair repeat at the origin) and separates the double-stranded (ds)DNA. Forms a right-handed helical filament on oriC DNA; dsDNA binds to the exterior of the filament while single-stranded (ss)DNA is stabiized in the filament's interior. The ATP-DnaA-oriC complex binds and stabilizes one strand of the AT-rich DNA unwinding element (DUE), permitting loading of DNA polymerase. After initiation quickly degrades to an ADP-DnaA complex that is not apt for DNA replication. Binds acidic phospholipids.</text>
</comment>
<comment type="subunit">
    <text evidence="1">Oligomerizes as a right-handed, spiral filament on DNA at oriC.</text>
</comment>
<comment type="subcellular location">
    <subcellularLocation>
        <location evidence="1">Cytoplasm</location>
    </subcellularLocation>
</comment>
<comment type="domain">
    <text evidence="1">Domain I is involved in oligomerization and binding regulators, domain II is flexibile and of varying length in different bacteria, domain III forms the AAA+ region, while domain IV binds dsDNA.</text>
</comment>
<comment type="similarity">
    <text evidence="1">Belongs to the DnaA family.</text>
</comment>
<evidence type="ECO:0000255" key="1">
    <source>
        <dbReference type="HAMAP-Rule" id="MF_00377"/>
    </source>
</evidence>